<gene>
    <name evidence="9 11" type="primary">TotA</name>
    <name type="ORF">CG31509</name>
</gene>
<organism>
    <name type="scientific">Drosophila melanogaster</name>
    <name type="common">Fruit fly</name>
    <dbReference type="NCBI Taxonomy" id="7227"/>
    <lineage>
        <taxon>Eukaryota</taxon>
        <taxon>Metazoa</taxon>
        <taxon>Ecdysozoa</taxon>
        <taxon>Arthropoda</taxon>
        <taxon>Hexapoda</taxon>
        <taxon>Insecta</taxon>
        <taxon>Pterygota</taxon>
        <taxon>Neoptera</taxon>
        <taxon>Endopterygota</taxon>
        <taxon>Diptera</taxon>
        <taxon>Brachycera</taxon>
        <taxon>Muscomorpha</taxon>
        <taxon>Ephydroidea</taxon>
        <taxon>Drosophilidae</taxon>
        <taxon>Drosophila</taxon>
        <taxon>Sophophora</taxon>
    </lineage>
</organism>
<comment type="function">
    <text evidence="2 3 4 5">A humoral factor that plays a role in stress tolerance; gives increased resistance to the lethal effects of bacterial challenge and stress. Regulated by the JAK/STAT pathway and NF-KB-like Relish pathway in the fat body, upd3 in the hemocytes and Mekk1 in response to septic injury and consequent immune response.</text>
</comment>
<comment type="subcellular location">
    <subcellularLocation>
        <location evidence="2 3 4">Secreted</location>
    </subcellularLocation>
    <text evidence="2 3">Secreted from the fat body into the hemolymph.</text>
</comment>
<comment type="tissue specificity">
    <text evidence="2 4">Expressed in the fat body (at protein level).</text>
</comment>
<comment type="developmental stage">
    <text evidence="2 3">Expressed in the third larval instar and maintained through pupal development. Levels gradually increase during adulthood.</text>
</comment>
<comment type="induction">
    <text evidence="2 3 4 5">By stressful conditions such as bacterial infection, heat shock, mechanical pressure, dehydration, feeding with oxidative agents such as paraquat or exposure to ultraviolet light.</text>
</comment>
<comment type="miscellaneous">
    <text evidence="3">Flies overexpressing TotA show prolonged survival and retain normal activity at otherwise lethal temperatures.</text>
</comment>
<comment type="similarity">
    <text evidence="6">Belongs to the Turandot family.</text>
</comment>
<protein>
    <recommendedName>
        <fullName>Protein Turandot A</fullName>
    </recommendedName>
</protein>
<reference evidence="6 8" key="1">
    <citation type="journal article" date="2001" name="Biochem. Biophys. Res. Commun.">
        <title>A family of Turandot-related genes in the humoral stress response of Drosophila.</title>
        <authorList>
            <person name="Ekengren S."/>
            <person name="Hultmark D."/>
        </authorList>
    </citation>
    <scope>NUCLEOTIDE SEQUENCE [MRNA]</scope>
    <scope>FUNCTION</scope>
    <scope>SUBCELLULAR LOCATION</scope>
    <scope>DEVELOPMENTAL STAGE</scope>
    <scope>INDUCTION</scope>
    <source>
        <strain evidence="8">Canton-S</strain>
        <tissue evidence="3">Pupae</tissue>
    </source>
</reference>
<reference evidence="6 7" key="2">
    <citation type="journal article" date="2001" name="Curr. Biol.">
        <title>A humoral stress response in Drosophila.</title>
        <authorList>
            <person name="Ekengren S."/>
            <person name="Tryselius Y."/>
            <person name="Dushay M.S."/>
            <person name="Liu G."/>
            <person name="Steiner H."/>
            <person name="Hultmark D."/>
        </authorList>
    </citation>
    <scope>NUCLEOTIDE SEQUENCE [GENOMIC DNA / MRNA]</scope>
    <scope>FUNCTION</scope>
    <scope>SUBCELLULAR LOCATION</scope>
    <scope>TISSUE SPECIFICITY</scope>
    <scope>DEVELOPMENTAL STAGE</scope>
    <scope>INDUCTION</scope>
    <source>
        <strain evidence="7">Canton-S</strain>
    </source>
</reference>
<reference evidence="9" key="3">
    <citation type="journal article" date="2000" name="Science">
        <title>The genome sequence of Drosophila melanogaster.</title>
        <authorList>
            <person name="Adams M.D."/>
            <person name="Celniker S.E."/>
            <person name="Holt R.A."/>
            <person name="Evans C.A."/>
            <person name="Gocayne J.D."/>
            <person name="Amanatides P.G."/>
            <person name="Scherer S.E."/>
            <person name="Li P.W."/>
            <person name="Hoskins R.A."/>
            <person name="Galle R.F."/>
            <person name="George R.A."/>
            <person name="Lewis S.E."/>
            <person name="Richards S."/>
            <person name="Ashburner M."/>
            <person name="Henderson S.N."/>
            <person name="Sutton G.G."/>
            <person name="Wortman J.R."/>
            <person name="Yandell M.D."/>
            <person name="Zhang Q."/>
            <person name="Chen L.X."/>
            <person name="Brandon R.C."/>
            <person name="Rogers Y.-H.C."/>
            <person name="Blazej R.G."/>
            <person name="Champe M."/>
            <person name="Pfeiffer B.D."/>
            <person name="Wan K.H."/>
            <person name="Doyle C."/>
            <person name="Baxter E.G."/>
            <person name="Helt G."/>
            <person name="Nelson C.R."/>
            <person name="Miklos G.L.G."/>
            <person name="Abril J.F."/>
            <person name="Agbayani A."/>
            <person name="An H.-J."/>
            <person name="Andrews-Pfannkoch C."/>
            <person name="Baldwin D."/>
            <person name="Ballew R.M."/>
            <person name="Basu A."/>
            <person name="Baxendale J."/>
            <person name="Bayraktaroglu L."/>
            <person name="Beasley E.M."/>
            <person name="Beeson K.Y."/>
            <person name="Benos P.V."/>
            <person name="Berman B.P."/>
            <person name="Bhandari D."/>
            <person name="Bolshakov S."/>
            <person name="Borkova D."/>
            <person name="Botchan M.R."/>
            <person name="Bouck J."/>
            <person name="Brokstein P."/>
            <person name="Brottier P."/>
            <person name="Burtis K.C."/>
            <person name="Busam D.A."/>
            <person name="Butler H."/>
            <person name="Cadieu E."/>
            <person name="Center A."/>
            <person name="Chandra I."/>
            <person name="Cherry J.M."/>
            <person name="Cawley S."/>
            <person name="Dahlke C."/>
            <person name="Davenport L.B."/>
            <person name="Davies P."/>
            <person name="de Pablos B."/>
            <person name="Delcher A."/>
            <person name="Deng Z."/>
            <person name="Mays A.D."/>
            <person name="Dew I."/>
            <person name="Dietz S.M."/>
            <person name="Dodson K."/>
            <person name="Doup L.E."/>
            <person name="Downes M."/>
            <person name="Dugan-Rocha S."/>
            <person name="Dunkov B.C."/>
            <person name="Dunn P."/>
            <person name="Durbin K.J."/>
            <person name="Evangelista C.C."/>
            <person name="Ferraz C."/>
            <person name="Ferriera S."/>
            <person name="Fleischmann W."/>
            <person name="Fosler C."/>
            <person name="Gabrielian A.E."/>
            <person name="Garg N.S."/>
            <person name="Gelbart W.M."/>
            <person name="Glasser K."/>
            <person name="Glodek A."/>
            <person name="Gong F."/>
            <person name="Gorrell J.H."/>
            <person name="Gu Z."/>
            <person name="Guan P."/>
            <person name="Harris M."/>
            <person name="Harris N.L."/>
            <person name="Harvey D.A."/>
            <person name="Heiman T.J."/>
            <person name="Hernandez J.R."/>
            <person name="Houck J."/>
            <person name="Hostin D."/>
            <person name="Houston K.A."/>
            <person name="Howland T.J."/>
            <person name="Wei M.-H."/>
            <person name="Ibegwam C."/>
            <person name="Jalali M."/>
            <person name="Kalush F."/>
            <person name="Karpen G.H."/>
            <person name="Ke Z."/>
            <person name="Kennison J.A."/>
            <person name="Ketchum K.A."/>
            <person name="Kimmel B.E."/>
            <person name="Kodira C.D."/>
            <person name="Kraft C.L."/>
            <person name="Kravitz S."/>
            <person name="Kulp D."/>
            <person name="Lai Z."/>
            <person name="Lasko P."/>
            <person name="Lei Y."/>
            <person name="Levitsky A.A."/>
            <person name="Li J.H."/>
            <person name="Li Z."/>
            <person name="Liang Y."/>
            <person name="Lin X."/>
            <person name="Liu X."/>
            <person name="Mattei B."/>
            <person name="McIntosh T.C."/>
            <person name="McLeod M.P."/>
            <person name="McPherson D."/>
            <person name="Merkulov G."/>
            <person name="Milshina N.V."/>
            <person name="Mobarry C."/>
            <person name="Morris J."/>
            <person name="Moshrefi A."/>
            <person name="Mount S.M."/>
            <person name="Moy M."/>
            <person name="Murphy B."/>
            <person name="Murphy L."/>
            <person name="Muzny D.M."/>
            <person name="Nelson D.L."/>
            <person name="Nelson D.R."/>
            <person name="Nelson K.A."/>
            <person name="Nixon K."/>
            <person name="Nusskern D.R."/>
            <person name="Pacleb J.M."/>
            <person name="Palazzolo M."/>
            <person name="Pittman G.S."/>
            <person name="Pan S."/>
            <person name="Pollard J."/>
            <person name="Puri V."/>
            <person name="Reese M.G."/>
            <person name="Reinert K."/>
            <person name="Remington K."/>
            <person name="Saunders R.D.C."/>
            <person name="Scheeler F."/>
            <person name="Shen H."/>
            <person name="Shue B.C."/>
            <person name="Siden-Kiamos I."/>
            <person name="Simpson M."/>
            <person name="Skupski M.P."/>
            <person name="Smith T.J."/>
            <person name="Spier E."/>
            <person name="Spradling A.C."/>
            <person name="Stapleton M."/>
            <person name="Strong R."/>
            <person name="Sun E."/>
            <person name="Svirskas R."/>
            <person name="Tector C."/>
            <person name="Turner R."/>
            <person name="Venter E."/>
            <person name="Wang A.H."/>
            <person name="Wang X."/>
            <person name="Wang Z.-Y."/>
            <person name="Wassarman D.A."/>
            <person name="Weinstock G.M."/>
            <person name="Weissenbach J."/>
            <person name="Williams S.M."/>
            <person name="Woodage T."/>
            <person name="Worley K.C."/>
            <person name="Wu D."/>
            <person name="Yang S."/>
            <person name="Yao Q.A."/>
            <person name="Ye J."/>
            <person name="Yeh R.-F."/>
            <person name="Zaveri J.S."/>
            <person name="Zhan M."/>
            <person name="Zhang G."/>
            <person name="Zhao Q."/>
            <person name="Zheng L."/>
            <person name="Zheng X.H."/>
            <person name="Zhong F.N."/>
            <person name="Zhong W."/>
            <person name="Zhou X."/>
            <person name="Zhu S.C."/>
            <person name="Zhu X."/>
            <person name="Smith H.O."/>
            <person name="Gibbs R.A."/>
            <person name="Myers E.W."/>
            <person name="Rubin G.M."/>
            <person name="Venter J.C."/>
        </authorList>
    </citation>
    <scope>NUCLEOTIDE SEQUENCE [LARGE SCALE GENOMIC DNA]</scope>
    <source>
        <strain>Berkeley</strain>
    </source>
</reference>
<reference evidence="6 9" key="4">
    <citation type="journal article" date="2002" name="Genome Biol.">
        <title>Annotation of the Drosophila melanogaster euchromatic genome: a systematic review.</title>
        <authorList>
            <person name="Misra S."/>
            <person name="Crosby M.A."/>
            <person name="Mungall C.J."/>
            <person name="Matthews B.B."/>
            <person name="Campbell K.S."/>
            <person name="Hradecky P."/>
            <person name="Huang Y."/>
            <person name="Kaminker J.S."/>
            <person name="Millburn G.H."/>
            <person name="Prochnik S.E."/>
            <person name="Smith C.D."/>
            <person name="Tupy J.L."/>
            <person name="Whitfield E.J."/>
            <person name="Bayraktaroglu L."/>
            <person name="Berman B.P."/>
            <person name="Bettencourt B.R."/>
            <person name="Celniker S.E."/>
            <person name="de Grey A.D.N.J."/>
            <person name="Drysdale R.A."/>
            <person name="Harris N.L."/>
            <person name="Richter J."/>
            <person name="Russo S."/>
            <person name="Schroeder A.J."/>
            <person name="Shu S.Q."/>
            <person name="Stapleton M."/>
            <person name="Yamada C."/>
            <person name="Ashburner M."/>
            <person name="Gelbart W.M."/>
            <person name="Rubin G.M."/>
            <person name="Lewis S.E."/>
        </authorList>
    </citation>
    <scope>GENOME REANNOTATION</scope>
    <source>
        <strain>Berkeley</strain>
    </source>
</reference>
<reference evidence="10" key="5">
    <citation type="submission" date="2003-12" db="EMBL/GenBank/DDBJ databases">
        <authorList>
            <person name="Stapleton M."/>
            <person name="Brokstein P."/>
            <person name="Hong L."/>
            <person name="Agbayani A."/>
            <person name="Carlson J.W."/>
            <person name="Champe M."/>
            <person name="Chavez C."/>
            <person name="Dorsett V."/>
            <person name="Dresnek D."/>
            <person name="Farfan D."/>
            <person name="Frise E."/>
            <person name="George R.A."/>
            <person name="Gonzalez M."/>
            <person name="Guarin H."/>
            <person name="Kronmiller B."/>
            <person name="Li P.W."/>
            <person name="Liao G."/>
            <person name="Miranda A."/>
            <person name="Mungall C.J."/>
            <person name="Nunoo J."/>
            <person name="Pacleb J.M."/>
            <person name="Paragas V."/>
            <person name="Park S."/>
            <person name="Patel S."/>
            <person name="Phouanenavong S."/>
            <person name="Wan K.H."/>
            <person name="Yu C."/>
            <person name="Lewis S.E."/>
            <person name="Rubin G.M."/>
            <person name="Celniker S.E."/>
        </authorList>
    </citation>
    <scope>NUCLEOTIDE SEQUENCE [LARGE SCALE MRNA]</scope>
    <source>
        <strain evidence="10">Berkeley</strain>
        <tissue>Head</tissue>
    </source>
</reference>
<reference evidence="6" key="6">
    <citation type="journal article" date="2003" name="Dev. Cell">
        <title>Signaling role of hemocytes in Drosophila JAK/STAT-dependent response to septic injury.</title>
        <authorList>
            <person name="Agaisse H."/>
            <person name="Petersen U.-M."/>
            <person name="Boutros M."/>
            <person name="Mathey-Prevot B."/>
            <person name="Perrimon N."/>
        </authorList>
    </citation>
    <scope>FUNCTION</scope>
    <scope>SUBCELLULAR LOCATION</scope>
    <scope>TISSUE SPECIFICITY</scope>
    <scope>INDUCTION</scope>
</reference>
<reference evidence="6" key="7">
    <citation type="journal article" date="2006" name="Genes Cells">
        <title>The MAPKKK Mekk1 regulates the expression of Turandot stress genes in response to septic injury in Drosophila.</title>
        <authorList>
            <person name="Brun S."/>
            <person name="Vidal S."/>
            <person name="Spellman P."/>
            <person name="Takahashi K."/>
            <person name="Tricoire H."/>
            <person name="Lemaitre B."/>
        </authorList>
    </citation>
    <scope>FUNCTION</scope>
    <scope>INDUCTION</scope>
</reference>
<dbReference type="EMBL" id="AY035990">
    <property type="protein sequence ID" value="AAK64523.1"/>
    <property type="molecule type" value="mRNA"/>
</dbReference>
<dbReference type="EMBL" id="AY029600">
    <property type="protein sequence ID" value="AAK40253.1"/>
    <property type="molecule type" value="mRNA"/>
</dbReference>
<dbReference type="EMBL" id="AY029601">
    <property type="protein sequence ID" value="AAK40254.1"/>
    <property type="molecule type" value="Genomic_DNA"/>
</dbReference>
<dbReference type="EMBL" id="AE014297">
    <property type="protein sequence ID" value="AAN13840.1"/>
    <property type="molecule type" value="Genomic_DNA"/>
</dbReference>
<dbReference type="EMBL" id="BT011049">
    <property type="protein sequence ID" value="AAR31120.1"/>
    <property type="molecule type" value="mRNA"/>
</dbReference>
<dbReference type="RefSeq" id="NP_536778.2">
    <property type="nucleotide sequence ID" value="NM_080517.3"/>
</dbReference>
<dbReference type="PDB" id="8PBV">
    <property type="method" value="NMR"/>
    <property type="chains" value="A=20-127"/>
</dbReference>
<dbReference type="PDBsum" id="8PBV"/>
<dbReference type="SMR" id="Q8IN44"/>
<dbReference type="FunCoup" id="Q8IN44">
    <property type="interactions" value="33"/>
</dbReference>
<dbReference type="STRING" id="7227.FBpp0083378"/>
<dbReference type="GlyCosmos" id="Q8IN44">
    <property type="glycosylation" value="1 site, No reported glycans"/>
</dbReference>
<dbReference type="GlyGen" id="Q8IN44">
    <property type="glycosylation" value="1 site"/>
</dbReference>
<dbReference type="PaxDb" id="7227-FBpp0083378"/>
<dbReference type="DNASU" id="44121"/>
<dbReference type="EnsemblMetazoa" id="FBtr0083971">
    <property type="protein sequence ID" value="FBpp0083378"/>
    <property type="gene ID" value="FBgn0028396"/>
</dbReference>
<dbReference type="GeneID" id="44121"/>
<dbReference type="KEGG" id="dme:Dmel_CG31509"/>
<dbReference type="UCSC" id="CG31509-RA">
    <property type="organism name" value="d. melanogaster"/>
</dbReference>
<dbReference type="AGR" id="FB:FBgn0028396"/>
<dbReference type="CTD" id="44121"/>
<dbReference type="FlyBase" id="FBgn0028396">
    <property type="gene designation" value="TotA"/>
</dbReference>
<dbReference type="VEuPathDB" id="VectorBase:FBgn0028396"/>
<dbReference type="GeneTree" id="ENSGT00940000176310"/>
<dbReference type="HOGENOM" id="CLU_152780_0_0_1"/>
<dbReference type="InParanoid" id="Q8IN44"/>
<dbReference type="OMA" id="CCAYSDA"/>
<dbReference type="OrthoDB" id="7861285at2759"/>
<dbReference type="PhylomeDB" id="Q8IN44"/>
<dbReference type="BioGRID-ORCS" id="44121">
    <property type="hits" value="0 hits in 1 CRISPR screen"/>
</dbReference>
<dbReference type="GenomeRNAi" id="44121"/>
<dbReference type="PRO" id="PR:Q8IN44"/>
<dbReference type="Proteomes" id="UP000000803">
    <property type="component" value="Chromosome 3R"/>
</dbReference>
<dbReference type="Bgee" id="FBgn0028396">
    <property type="expression patterns" value="Expressed in head capsule and 89 other cell types or tissues"/>
</dbReference>
<dbReference type="ExpressionAtlas" id="Q8IN44">
    <property type="expression patterns" value="baseline and differential"/>
</dbReference>
<dbReference type="GO" id="GO:0005615">
    <property type="term" value="C:extracellular space"/>
    <property type="evidence" value="ECO:0000314"/>
    <property type="project" value="UniProtKB"/>
</dbReference>
<dbReference type="GO" id="GO:0034605">
    <property type="term" value="P:cellular response to heat"/>
    <property type="evidence" value="ECO:0000270"/>
    <property type="project" value="FlyBase"/>
</dbReference>
<dbReference type="GO" id="GO:0071260">
    <property type="term" value="P:cellular response to mechanical stimulus"/>
    <property type="evidence" value="ECO:0000270"/>
    <property type="project" value="FlyBase"/>
</dbReference>
<dbReference type="GO" id="GO:0034599">
    <property type="term" value="P:cellular response to oxidative stress"/>
    <property type="evidence" value="ECO:0000270"/>
    <property type="project" value="FlyBase"/>
</dbReference>
<dbReference type="GO" id="GO:0034644">
    <property type="term" value="P:cellular response to UV"/>
    <property type="evidence" value="ECO:0000270"/>
    <property type="project" value="FlyBase"/>
</dbReference>
<dbReference type="GO" id="GO:0042742">
    <property type="term" value="P:defense response to bacterium"/>
    <property type="evidence" value="ECO:0007669"/>
    <property type="project" value="UniProtKB-KW"/>
</dbReference>
<dbReference type="GO" id="GO:0045087">
    <property type="term" value="P:innate immune response"/>
    <property type="evidence" value="ECO:0007669"/>
    <property type="project" value="UniProtKB-KW"/>
</dbReference>
<dbReference type="GO" id="GO:0009617">
    <property type="term" value="P:response to bacterium"/>
    <property type="evidence" value="ECO:0000314"/>
    <property type="project" value="UniProtKB"/>
</dbReference>
<dbReference type="GO" id="GO:0009409">
    <property type="term" value="P:response to cold"/>
    <property type="evidence" value="ECO:0000314"/>
    <property type="project" value="UniProtKB"/>
</dbReference>
<dbReference type="GO" id="GO:0009408">
    <property type="term" value="P:response to heat"/>
    <property type="evidence" value="ECO:0000314"/>
    <property type="project" value="UniProtKB"/>
</dbReference>
<dbReference type="GO" id="GO:0009612">
    <property type="term" value="P:response to mechanical stimulus"/>
    <property type="evidence" value="ECO:0000314"/>
    <property type="project" value="UniProtKB"/>
</dbReference>
<dbReference type="GO" id="GO:0046689">
    <property type="term" value="P:response to mercury ion"/>
    <property type="evidence" value="ECO:0000315"/>
    <property type="project" value="FlyBase"/>
</dbReference>
<dbReference type="GO" id="GO:0051597">
    <property type="term" value="P:response to methylmercury"/>
    <property type="evidence" value="ECO:0000315"/>
    <property type="project" value="FlyBase"/>
</dbReference>
<dbReference type="GO" id="GO:0006979">
    <property type="term" value="P:response to oxidative stress"/>
    <property type="evidence" value="ECO:0000314"/>
    <property type="project" value="UniProtKB"/>
</dbReference>
<dbReference type="GO" id="GO:0009411">
    <property type="term" value="P:response to UV"/>
    <property type="evidence" value="ECO:0000314"/>
    <property type="project" value="UniProtKB"/>
</dbReference>
<dbReference type="GO" id="GO:0009414">
    <property type="term" value="P:response to water deprivation"/>
    <property type="evidence" value="ECO:0000314"/>
    <property type="project" value="UniProtKB"/>
</dbReference>
<dbReference type="InterPro" id="IPR010825">
    <property type="entry name" value="Turandot"/>
</dbReference>
<dbReference type="Pfam" id="PF07240">
    <property type="entry name" value="Turandot"/>
    <property type="match status" value="1"/>
</dbReference>
<keyword id="KW-0002">3D-structure</keyword>
<keyword id="KW-0044">Antibiotic</keyword>
<keyword id="KW-0929">Antimicrobial</keyword>
<keyword id="KW-0325">Glycoprotein</keyword>
<keyword id="KW-0391">Immunity</keyword>
<keyword id="KW-0399">Innate immunity</keyword>
<keyword id="KW-1185">Reference proteome</keyword>
<keyword id="KW-0964">Secreted</keyword>
<keyword id="KW-0732">Signal</keyword>
<accession>Q8IN44</accession>
<accession>Q95NS3</accession>
<proteinExistence type="evidence at protein level"/>
<feature type="signal peptide" evidence="1">
    <location>
        <begin position="1"/>
        <end position="21"/>
    </location>
</feature>
<feature type="chain" id="PRO_0000355137" description="Protein Turandot A">
    <location>
        <begin position="22"/>
        <end position="129"/>
    </location>
</feature>
<feature type="glycosylation site" description="N-linked (GlcNAc...) asparagine" evidence="1">
    <location>
        <position position="49"/>
    </location>
</feature>
<feature type="sequence conflict" description="In Ref. 1; AAK64523 and 2; AAK40253/AAK40254." evidence="6" ref="1 2">
    <original>N</original>
    <variation>S</variation>
    <location>
        <position position="31"/>
    </location>
</feature>
<evidence type="ECO:0000255" key="1"/>
<evidence type="ECO:0000269" key="2">
    <source>
    </source>
</evidence>
<evidence type="ECO:0000269" key="3">
    <source>
    </source>
</evidence>
<evidence type="ECO:0000269" key="4">
    <source>
    </source>
</evidence>
<evidence type="ECO:0000269" key="5">
    <source>
    </source>
</evidence>
<evidence type="ECO:0000305" key="6"/>
<evidence type="ECO:0000312" key="7">
    <source>
        <dbReference type="EMBL" id="AAK40253.1"/>
    </source>
</evidence>
<evidence type="ECO:0000312" key="8">
    <source>
        <dbReference type="EMBL" id="AAK64523.1"/>
    </source>
</evidence>
<evidence type="ECO:0000312" key="9">
    <source>
        <dbReference type="EMBL" id="AAN13840.1"/>
    </source>
</evidence>
<evidence type="ECO:0000312" key="10">
    <source>
        <dbReference type="EMBL" id="AAR31120.1"/>
    </source>
</evidence>
<evidence type="ECO:0000312" key="11">
    <source>
        <dbReference type="FlyBase" id="FBgn0028396"/>
    </source>
</evidence>
<sequence>MNSSTALMCFALLLISPLCMGYSDEDREADNLRIAEIIKNAQDDDSKINSTQELLDIYRRLYPSLTPEERESIDKFVNEHTDAIIIDGVPIQGGRKARIVGKIVSPGVKGLATGFFEELGSKLAQLFTG</sequence>
<name>TOTA_DROME</name>